<accession>Q17VN8</accession>
<dbReference type="EMBL" id="AM260522">
    <property type="protein sequence ID" value="CAK00288.1"/>
    <property type="molecule type" value="Genomic_DNA"/>
</dbReference>
<dbReference type="RefSeq" id="WP_001254357.1">
    <property type="nucleotide sequence ID" value="NC_008229.1"/>
</dbReference>
<dbReference type="SMR" id="Q17VN8"/>
<dbReference type="STRING" id="382638.Hac_1576"/>
<dbReference type="GeneID" id="31758828"/>
<dbReference type="KEGG" id="hac:Hac_1576"/>
<dbReference type="eggNOG" id="COG0049">
    <property type="taxonomic scope" value="Bacteria"/>
</dbReference>
<dbReference type="HOGENOM" id="CLU_072226_1_1_7"/>
<dbReference type="OrthoDB" id="9807653at2"/>
<dbReference type="BioCyc" id="HACI382638:HAC_RS06635-MONOMER"/>
<dbReference type="Proteomes" id="UP000000775">
    <property type="component" value="Chromosome"/>
</dbReference>
<dbReference type="GO" id="GO:0015935">
    <property type="term" value="C:small ribosomal subunit"/>
    <property type="evidence" value="ECO:0007669"/>
    <property type="project" value="InterPro"/>
</dbReference>
<dbReference type="GO" id="GO:0019843">
    <property type="term" value="F:rRNA binding"/>
    <property type="evidence" value="ECO:0007669"/>
    <property type="project" value="UniProtKB-UniRule"/>
</dbReference>
<dbReference type="GO" id="GO:0003735">
    <property type="term" value="F:structural constituent of ribosome"/>
    <property type="evidence" value="ECO:0007669"/>
    <property type="project" value="InterPro"/>
</dbReference>
<dbReference type="GO" id="GO:0000049">
    <property type="term" value="F:tRNA binding"/>
    <property type="evidence" value="ECO:0007669"/>
    <property type="project" value="UniProtKB-UniRule"/>
</dbReference>
<dbReference type="GO" id="GO:0006412">
    <property type="term" value="P:translation"/>
    <property type="evidence" value="ECO:0007669"/>
    <property type="project" value="UniProtKB-UniRule"/>
</dbReference>
<dbReference type="CDD" id="cd14869">
    <property type="entry name" value="uS7_Bacteria"/>
    <property type="match status" value="1"/>
</dbReference>
<dbReference type="FunFam" id="1.10.455.10:FF:000001">
    <property type="entry name" value="30S ribosomal protein S7"/>
    <property type="match status" value="1"/>
</dbReference>
<dbReference type="Gene3D" id="1.10.455.10">
    <property type="entry name" value="Ribosomal protein S7 domain"/>
    <property type="match status" value="1"/>
</dbReference>
<dbReference type="HAMAP" id="MF_00480_B">
    <property type="entry name" value="Ribosomal_uS7_B"/>
    <property type="match status" value="1"/>
</dbReference>
<dbReference type="InterPro" id="IPR000235">
    <property type="entry name" value="Ribosomal_uS7"/>
</dbReference>
<dbReference type="InterPro" id="IPR005717">
    <property type="entry name" value="Ribosomal_uS7_bac/org-type"/>
</dbReference>
<dbReference type="InterPro" id="IPR020606">
    <property type="entry name" value="Ribosomal_uS7_CS"/>
</dbReference>
<dbReference type="InterPro" id="IPR023798">
    <property type="entry name" value="Ribosomal_uS7_dom"/>
</dbReference>
<dbReference type="InterPro" id="IPR036823">
    <property type="entry name" value="Ribosomal_uS7_dom_sf"/>
</dbReference>
<dbReference type="NCBIfam" id="TIGR01029">
    <property type="entry name" value="rpsG_bact"/>
    <property type="match status" value="1"/>
</dbReference>
<dbReference type="PANTHER" id="PTHR11205">
    <property type="entry name" value="RIBOSOMAL PROTEIN S7"/>
    <property type="match status" value="1"/>
</dbReference>
<dbReference type="Pfam" id="PF00177">
    <property type="entry name" value="Ribosomal_S7"/>
    <property type="match status" value="1"/>
</dbReference>
<dbReference type="PIRSF" id="PIRSF002122">
    <property type="entry name" value="RPS7p_RPS7a_RPS5e_RPS7o"/>
    <property type="match status" value="1"/>
</dbReference>
<dbReference type="SUPFAM" id="SSF47973">
    <property type="entry name" value="Ribosomal protein S7"/>
    <property type="match status" value="1"/>
</dbReference>
<dbReference type="PROSITE" id="PS00052">
    <property type="entry name" value="RIBOSOMAL_S7"/>
    <property type="match status" value="1"/>
</dbReference>
<sequence>MRRRKAPVREVLGDPVYGNKVVTKFINKMMFDGKKSVAEKIIYKAFNKIEEKSGEKGIEVFEKALERVRPLVEVRSRRVGGATYQVPVEVRASRQQSLSIRWILEATRKRNERMMVDRLANELMDAASDKGAAFKKKEDVHKMAEANKAFAHYRW</sequence>
<feature type="chain" id="PRO_1000014204" description="Small ribosomal subunit protein uS7">
    <location>
        <begin position="1"/>
        <end position="155"/>
    </location>
</feature>
<comment type="function">
    <text evidence="1">One of the primary rRNA binding proteins, it binds directly to 16S rRNA where it nucleates assembly of the head domain of the 30S subunit. Is located at the subunit interface close to the decoding center, probably blocks exit of the E-site tRNA.</text>
</comment>
<comment type="subunit">
    <text evidence="1">Part of the 30S ribosomal subunit. Contacts proteins S9 and S11.</text>
</comment>
<comment type="similarity">
    <text evidence="1">Belongs to the universal ribosomal protein uS7 family.</text>
</comment>
<proteinExistence type="inferred from homology"/>
<gene>
    <name evidence="1" type="primary">rpsG</name>
    <name type="ordered locus">Hac_1576</name>
</gene>
<protein>
    <recommendedName>
        <fullName evidence="1">Small ribosomal subunit protein uS7</fullName>
    </recommendedName>
    <alternativeName>
        <fullName evidence="2">30S ribosomal protein S7</fullName>
    </alternativeName>
</protein>
<reference key="1">
    <citation type="journal article" date="2006" name="PLoS Genet.">
        <title>Who ate whom? Adaptive Helicobacter genomic changes that accompanied a host jump from early humans to large felines.</title>
        <authorList>
            <person name="Eppinger M."/>
            <person name="Baar C."/>
            <person name="Linz B."/>
            <person name="Raddatz G."/>
            <person name="Lanz C."/>
            <person name="Keller H."/>
            <person name="Morelli G."/>
            <person name="Gressmann H."/>
            <person name="Achtman M."/>
            <person name="Schuster S.C."/>
        </authorList>
    </citation>
    <scope>NUCLEOTIDE SEQUENCE [LARGE SCALE GENOMIC DNA]</scope>
    <source>
        <strain>Sheeba</strain>
    </source>
</reference>
<keyword id="KW-0687">Ribonucleoprotein</keyword>
<keyword id="KW-0689">Ribosomal protein</keyword>
<keyword id="KW-0694">RNA-binding</keyword>
<keyword id="KW-0699">rRNA-binding</keyword>
<keyword id="KW-0820">tRNA-binding</keyword>
<organism>
    <name type="scientific">Helicobacter acinonychis (strain Sheeba)</name>
    <dbReference type="NCBI Taxonomy" id="382638"/>
    <lineage>
        <taxon>Bacteria</taxon>
        <taxon>Pseudomonadati</taxon>
        <taxon>Campylobacterota</taxon>
        <taxon>Epsilonproteobacteria</taxon>
        <taxon>Campylobacterales</taxon>
        <taxon>Helicobacteraceae</taxon>
        <taxon>Helicobacter</taxon>
    </lineage>
</organism>
<evidence type="ECO:0000255" key="1">
    <source>
        <dbReference type="HAMAP-Rule" id="MF_00480"/>
    </source>
</evidence>
<evidence type="ECO:0000305" key="2"/>
<name>RS7_HELAH</name>